<accession>Q82DM3</accession>
<sequence length="134" mass="14384">MPPKGRQGAAKKVRRKEKKNVAHGHAHIKSTFNNTIVSITDPSGNVISWASAGHVGFKGSRKSTPFAAQMAAESAARRAQEHGMRKVDVFVKGPGSGRETAIRSLQATGLEVGSIQDVTPTPHNGCRPPKRRRV</sequence>
<comment type="function">
    <text evidence="1">Located on the platform of the 30S subunit, it bridges several disparate RNA helices of the 16S rRNA. Forms part of the Shine-Dalgarno cleft in the 70S ribosome.</text>
</comment>
<comment type="subunit">
    <text evidence="1">Part of the 30S ribosomal subunit. Interacts with proteins S7 and S18. Binds to IF-3.</text>
</comment>
<comment type="similarity">
    <text evidence="1">Belongs to the universal ribosomal protein uS11 family.</text>
</comment>
<protein>
    <recommendedName>
        <fullName evidence="1">Small ribosomal subunit protein uS11</fullName>
    </recommendedName>
    <alternativeName>
        <fullName evidence="3">30S ribosomal protein S11</fullName>
    </alternativeName>
</protein>
<dbReference type="EMBL" id="BA000030">
    <property type="protein sequence ID" value="BAC72664.1"/>
    <property type="molecule type" value="Genomic_DNA"/>
</dbReference>
<dbReference type="RefSeq" id="WP_003956432.1">
    <property type="nucleotide sequence ID" value="NZ_JZJK01000077.1"/>
</dbReference>
<dbReference type="SMR" id="Q82DM3"/>
<dbReference type="GeneID" id="97760396"/>
<dbReference type="KEGG" id="sma:SAVERM_4952"/>
<dbReference type="eggNOG" id="COG0100">
    <property type="taxonomic scope" value="Bacteria"/>
</dbReference>
<dbReference type="HOGENOM" id="CLU_072439_5_0_11"/>
<dbReference type="OrthoDB" id="9806415at2"/>
<dbReference type="Proteomes" id="UP000000428">
    <property type="component" value="Chromosome"/>
</dbReference>
<dbReference type="GO" id="GO:1990904">
    <property type="term" value="C:ribonucleoprotein complex"/>
    <property type="evidence" value="ECO:0007669"/>
    <property type="project" value="UniProtKB-KW"/>
</dbReference>
<dbReference type="GO" id="GO:0005840">
    <property type="term" value="C:ribosome"/>
    <property type="evidence" value="ECO:0007669"/>
    <property type="project" value="UniProtKB-KW"/>
</dbReference>
<dbReference type="GO" id="GO:0019843">
    <property type="term" value="F:rRNA binding"/>
    <property type="evidence" value="ECO:0007669"/>
    <property type="project" value="UniProtKB-UniRule"/>
</dbReference>
<dbReference type="GO" id="GO:0003735">
    <property type="term" value="F:structural constituent of ribosome"/>
    <property type="evidence" value="ECO:0007669"/>
    <property type="project" value="InterPro"/>
</dbReference>
<dbReference type="GO" id="GO:0006412">
    <property type="term" value="P:translation"/>
    <property type="evidence" value="ECO:0007669"/>
    <property type="project" value="UniProtKB-UniRule"/>
</dbReference>
<dbReference type="FunFam" id="3.30.420.80:FF:000001">
    <property type="entry name" value="30S ribosomal protein S11"/>
    <property type="match status" value="1"/>
</dbReference>
<dbReference type="Gene3D" id="3.30.420.80">
    <property type="entry name" value="Ribosomal protein S11"/>
    <property type="match status" value="1"/>
</dbReference>
<dbReference type="HAMAP" id="MF_01310">
    <property type="entry name" value="Ribosomal_uS11"/>
    <property type="match status" value="1"/>
</dbReference>
<dbReference type="InterPro" id="IPR001971">
    <property type="entry name" value="Ribosomal_uS11"/>
</dbReference>
<dbReference type="InterPro" id="IPR019981">
    <property type="entry name" value="Ribosomal_uS11_bac-type"/>
</dbReference>
<dbReference type="InterPro" id="IPR018102">
    <property type="entry name" value="Ribosomal_uS11_CS"/>
</dbReference>
<dbReference type="InterPro" id="IPR036967">
    <property type="entry name" value="Ribosomal_uS11_sf"/>
</dbReference>
<dbReference type="NCBIfam" id="NF003698">
    <property type="entry name" value="PRK05309.1"/>
    <property type="match status" value="1"/>
</dbReference>
<dbReference type="NCBIfam" id="TIGR03632">
    <property type="entry name" value="uS11_bact"/>
    <property type="match status" value="1"/>
</dbReference>
<dbReference type="PANTHER" id="PTHR11759">
    <property type="entry name" value="40S RIBOSOMAL PROTEIN S14/30S RIBOSOMAL PROTEIN S11"/>
    <property type="match status" value="1"/>
</dbReference>
<dbReference type="Pfam" id="PF00411">
    <property type="entry name" value="Ribosomal_S11"/>
    <property type="match status" value="1"/>
</dbReference>
<dbReference type="PIRSF" id="PIRSF002131">
    <property type="entry name" value="Ribosomal_S11"/>
    <property type="match status" value="1"/>
</dbReference>
<dbReference type="SUPFAM" id="SSF53137">
    <property type="entry name" value="Translational machinery components"/>
    <property type="match status" value="1"/>
</dbReference>
<dbReference type="PROSITE" id="PS00054">
    <property type="entry name" value="RIBOSOMAL_S11"/>
    <property type="match status" value="1"/>
</dbReference>
<proteinExistence type="inferred from homology"/>
<gene>
    <name evidence="1" type="primary">rpsK</name>
    <name type="ordered locus">SAV_4952</name>
</gene>
<organism>
    <name type="scientific">Streptomyces avermitilis (strain ATCC 31267 / DSM 46492 / JCM 5070 / NBRC 14893 / NCIMB 12804 / NRRL 8165 / MA-4680)</name>
    <dbReference type="NCBI Taxonomy" id="227882"/>
    <lineage>
        <taxon>Bacteria</taxon>
        <taxon>Bacillati</taxon>
        <taxon>Actinomycetota</taxon>
        <taxon>Actinomycetes</taxon>
        <taxon>Kitasatosporales</taxon>
        <taxon>Streptomycetaceae</taxon>
        <taxon>Streptomyces</taxon>
    </lineage>
</organism>
<evidence type="ECO:0000255" key="1">
    <source>
        <dbReference type="HAMAP-Rule" id="MF_01310"/>
    </source>
</evidence>
<evidence type="ECO:0000256" key="2">
    <source>
        <dbReference type="SAM" id="MobiDB-lite"/>
    </source>
</evidence>
<evidence type="ECO:0000305" key="3"/>
<reference key="1">
    <citation type="journal article" date="2001" name="Proc. Natl. Acad. Sci. U.S.A.">
        <title>Genome sequence of an industrial microorganism Streptomyces avermitilis: deducing the ability of producing secondary metabolites.</title>
        <authorList>
            <person name="Omura S."/>
            <person name="Ikeda H."/>
            <person name="Ishikawa J."/>
            <person name="Hanamoto A."/>
            <person name="Takahashi C."/>
            <person name="Shinose M."/>
            <person name="Takahashi Y."/>
            <person name="Horikawa H."/>
            <person name="Nakazawa H."/>
            <person name="Osonoe T."/>
            <person name="Kikuchi H."/>
            <person name="Shiba T."/>
            <person name="Sakaki Y."/>
            <person name="Hattori M."/>
        </authorList>
    </citation>
    <scope>NUCLEOTIDE SEQUENCE [LARGE SCALE GENOMIC DNA]</scope>
    <source>
        <strain>ATCC 31267 / DSM 46492 / JCM 5070 / NBRC 14893 / NCIMB 12804 / NRRL 8165 / MA-4680</strain>
    </source>
</reference>
<reference key="2">
    <citation type="journal article" date="2003" name="Nat. Biotechnol.">
        <title>Complete genome sequence and comparative analysis of the industrial microorganism Streptomyces avermitilis.</title>
        <authorList>
            <person name="Ikeda H."/>
            <person name="Ishikawa J."/>
            <person name="Hanamoto A."/>
            <person name="Shinose M."/>
            <person name="Kikuchi H."/>
            <person name="Shiba T."/>
            <person name="Sakaki Y."/>
            <person name="Hattori M."/>
            <person name="Omura S."/>
        </authorList>
    </citation>
    <scope>NUCLEOTIDE SEQUENCE [LARGE SCALE GENOMIC DNA]</scope>
    <source>
        <strain>ATCC 31267 / DSM 46492 / JCM 5070 / NBRC 14893 / NCIMB 12804 / NRRL 8165 / MA-4680</strain>
    </source>
</reference>
<keyword id="KW-1185">Reference proteome</keyword>
<keyword id="KW-0687">Ribonucleoprotein</keyword>
<keyword id="KW-0689">Ribosomal protein</keyword>
<keyword id="KW-0694">RNA-binding</keyword>
<keyword id="KW-0699">rRNA-binding</keyword>
<name>RS11_STRAW</name>
<feature type="chain" id="PRO_0000123230" description="Small ribosomal subunit protein uS11">
    <location>
        <begin position="1"/>
        <end position="134"/>
    </location>
</feature>
<feature type="region of interest" description="Disordered" evidence="2">
    <location>
        <begin position="1"/>
        <end position="22"/>
    </location>
</feature>
<feature type="region of interest" description="Disordered" evidence="2">
    <location>
        <begin position="114"/>
        <end position="134"/>
    </location>
</feature>
<feature type="compositionally biased region" description="Basic residues" evidence="2">
    <location>
        <begin position="9"/>
        <end position="22"/>
    </location>
</feature>